<proteinExistence type="inferred from homology"/>
<sequence length="348" mass="37475">MTTLQGKSITVHDMTLRDGMHPKRHLMTLDQMRTIAQGLDAAGVPLIEVTHGDGLGGSSLNYGFPAHSDEEYLGAVIPLMKQAKVSALLLPGIGTVDHLKMARELGVHTIRVATHCTEADVSEQHISYARKLDMDTVGFLMMAHMNSPEGLVKQAKLMESYGANCIYITDSAGYMLPDDVKVRLSAVREALKPETELGFHGHHNLAMGIANSIAAIECGATRIDAAAAGLGAGAGNTPMEVLVAVCDRMGIRTGVDVWKIQDVAEDLVVPIMDFPIRIDRDALTLGYAGVYGSFLLFAKRAEKKYGVPARDLLVELGRRGMVGGQEDMIEDTALTMARQRGLLPEQAA</sequence>
<evidence type="ECO:0000255" key="1">
    <source>
        <dbReference type="HAMAP-Rule" id="MF_01656"/>
    </source>
</evidence>
<accession>B2UJF1</accession>
<name>HOA_RALPJ</name>
<feature type="chain" id="PRO_0000387891" description="4-hydroxy-2-oxovalerate aldolase">
    <location>
        <begin position="1"/>
        <end position="348"/>
    </location>
</feature>
<feature type="domain" description="Pyruvate carboxyltransferase" evidence="1">
    <location>
        <begin position="9"/>
        <end position="261"/>
    </location>
</feature>
<feature type="active site" description="Proton acceptor" evidence="1">
    <location>
        <position position="21"/>
    </location>
</feature>
<feature type="binding site" evidence="1">
    <location>
        <begin position="17"/>
        <end position="18"/>
    </location>
    <ligand>
        <name>substrate</name>
    </ligand>
</feature>
<feature type="binding site" evidence="1">
    <location>
        <position position="18"/>
    </location>
    <ligand>
        <name>Mn(2+)</name>
        <dbReference type="ChEBI" id="CHEBI:29035"/>
    </ligand>
</feature>
<feature type="binding site" evidence="1">
    <location>
        <position position="171"/>
    </location>
    <ligand>
        <name>substrate</name>
    </ligand>
</feature>
<feature type="binding site" evidence="1">
    <location>
        <position position="200"/>
    </location>
    <ligand>
        <name>Mn(2+)</name>
        <dbReference type="ChEBI" id="CHEBI:29035"/>
    </ligand>
</feature>
<feature type="binding site" evidence="1">
    <location>
        <position position="200"/>
    </location>
    <ligand>
        <name>substrate</name>
    </ligand>
</feature>
<feature type="binding site" evidence="1">
    <location>
        <position position="202"/>
    </location>
    <ligand>
        <name>Mn(2+)</name>
        <dbReference type="ChEBI" id="CHEBI:29035"/>
    </ligand>
</feature>
<feature type="binding site" evidence="1">
    <location>
        <position position="291"/>
    </location>
    <ligand>
        <name>substrate</name>
    </ligand>
</feature>
<feature type="site" description="Transition state stabilizer" evidence="1">
    <location>
        <position position="17"/>
    </location>
</feature>
<dbReference type="EC" id="4.1.3.39" evidence="1"/>
<dbReference type="EMBL" id="CP001069">
    <property type="protein sequence ID" value="ACD29702.1"/>
    <property type="molecule type" value="Genomic_DNA"/>
</dbReference>
<dbReference type="SMR" id="B2UJF1"/>
<dbReference type="STRING" id="402626.Rpic_4617"/>
<dbReference type="KEGG" id="rpi:Rpic_4617"/>
<dbReference type="eggNOG" id="COG0119">
    <property type="taxonomic scope" value="Bacteria"/>
</dbReference>
<dbReference type="HOGENOM" id="CLU_049173_0_0_4"/>
<dbReference type="GO" id="GO:0003852">
    <property type="term" value="F:2-isopropylmalate synthase activity"/>
    <property type="evidence" value="ECO:0007669"/>
    <property type="project" value="TreeGrafter"/>
</dbReference>
<dbReference type="GO" id="GO:0008701">
    <property type="term" value="F:4-hydroxy-2-oxovalerate aldolase activity"/>
    <property type="evidence" value="ECO:0007669"/>
    <property type="project" value="UniProtKB-UniRule"/>
</dbReference>
<dbReference type="GO" id="GO:0030145">
    <property type="term" value="F:manganese ion binding"/>
    <property type="evidence" value="ECO:0007669"/>
    <property type="project" value="UniProtKB-UniRule"/>
</dbReference>
<dbReference type="GO" id="GO:0009056">
    <property type="term" value="P:catabolic process"/>
    <property type="evidence" value="ECO:0007669"/>
    <property type="project" value="UniProtKB-KW"/>
</dbReference>
<dbReference type="GO" id="GO:0009098">
    <property type="term" value="P:L-leucine biosynthetic process"/>
    <property type="evidence" value="ECO:0007669"/>
    <property type="project" value="TreeGrafter"/>
</dbReference>
<dbReference type="CDD" id="cd07943">
    <property type="entry name" value="DRE_TIM_HOA"/>
    <property type="match status" value="1"/>
</dbReference>
<dbReference type="Gene3D" id="1.10.8.60">
    <property type="match status" value="1"/>
</dbReference>
<dbReference type="Gene3D" id="3.20.20.70">
    <property type="entry name" value="Aldolase class I"/>
    <property type="match status" value="1"/>
</dbReference>
<dbReference type="HAMAP" id="MF_01656">
    <property type="entry name" value="HOA"/>
    <property type="match status" value="1"/>
</dbReference>
<dbReference type="InterPro" id="IPR050073">
    <property type="entry name" value="2-IPM_HCS-like"/>
</dbReference>
<dbReference type="InterPro" id="IPR017629">
    <property type="entry name" value="4OH_2_O-val_aldolase"/>
</dbReference>
<dbReference type="InterPro" id="IPR013785">
    <property type="entry name" value="Aldolase_TIM"/>
</dbReference>
<dbReference type="InterPro" id="IPR012425">
    <property type="entry name" value="DmpG_comm"/>
</dbReference>
<dbReference type="InterPro" id="IPR035685">
    <property type="entry name" value="DRE_TIM_HOA"/>
</dbReference>
<dbReference type="InterPro" id="IPR000891">
    <property type="entry name" value="PYR_CT"/>
</dbReference>
<dbReference type="NCBIfam" id="TIGR03217">
    <property type="entry name" value="4OH_2_O_val_ald"/>
    <property type="match status" value="1"/>
</dbReference>
<dbReference type="NCBIfam" id="NF006049">
    <property type="entry name" value="PRK08195.1"/>
    <property type="match status" value="1"/>
</dbReference>
<dbReference type="PANTHER" id="PTHR10277:SF9">
    <property type="entry name" value="2-ISOPROPYLMALATE SYNTHASE 1, CHLOROPLASTIC-RELATED"/>
    <property type="match status" value="1"/>
</dbReference>
<dbReference type="PANTHER" id="PTHR10277">
    <property type="entry name" value="HOMOCITRATE SYNTHASE-RELATED"/>
    <property type="match status" value="1"/>
</dbReference>
<dbReference type="Pfam" id="PF07836">
    <property type="entry name" value="DmpG_comm"/>
    <property type="match status" value="1"/>
</dbReference>
<dbReference type="Pfam" id="PF00682">
    <property type="entry name" value="HMGL-like"/>
    <property type="match status" value="1"/>
</dbReference>
<dbReference type="SUPFAM" id="SSF51569">
    <property type="entry name" value="Aldolase"/>
    <property type="match status" value="1"/>
</dbReference>
<dbReference type="SUPFAM" id="SSF89000">
    <property type="entry name" value="post-HMGL domain-like"/>
    <property type="match status" value="1"/>
</dbReference>
<dbReference type="PROSITE" id="PS50991">
    <property type="entry name" value="PYR_CT"/>
    <property type="match status" value="1"/>
</dbReference>
<keyword id="KW-0058">Aromatic hydrocarbons catabolism</keyword>
<keyword id="KW-0456">Lyase</keyword>
<keyword id="KW-0464">Manganese</keyword>
<keyword id="KW-0479">Metal-binding</keyword>
<protein>
    <recommendedName>
        <fullName evidence="1">4-hydroxy-2-oxovalerate aldolase</fullName>
        <shortName evidence="1">HOA</shortName>
        <ecNumber evidence="1">4.1.3.39</ecNumber>
    </recommendedName>
    <alternativeName>
        <fullName evidence="1">4-hydroxy-2-keto-pentanoic acid aldolase</fullName>
    </alternativeName>
    <alternativeName>
        <fullName evidence="1">4-hydroxy-2-oxopentanoate aldolase</fullName>
    </alternativeName>
</protein>
<comment type="catalytic activity">
    <reaction evidence="1">
        <text>(S)-4-hydroxy-2-oxopentanoate = acetaldehyde + pyruvate</text>
        <dbReference type="Rhea" id="RHEA:22624"/>
        <dbReference type="ChEBI" id="CHEBI:15343"/>
        <dbReference type="ChEBI" id="CHEBI:15361"/>
        <dbReference type="ChEBI" id="CHEBI:73143"/>
        <dbReference type="EC" id="4.1.3.39"/>
    </reaction>
</comment>
<comment type="similarity">
    <text evidence="1">Belongs to the 4-hydroxy-2-oxovalerate aldolase family.</text>
</comment>
<reference key="1">
    <citation type="submission" date="2008-05" db="EMBL/GenBank/DDBJ databases">
        <title>Complete sequence of chromosome 2 of Ralstonia pickettii 12J.</title>
        <authorList>
            <person name="Lucas S."/>
            <person name="Copeland A."/>
            <person name="Lapidus A."/>
            <person name="Glavina del Rio T."/>
            <person name="Dalin E."/>
            <person name="Tice H."/>
            <person name="Bruce D."/>
            <person name="Goodwin L."/>
            <person name="Pitluck S."/>
            <person name="Meincke L."/>
            <person name="Brettin T."/>
            <person name="Detter J.C."/>
            <person name="Han C."/>
            <person name="Kuske C.R."/>
            <person name="Schmutz J."/>
            <person name="Larimer F."/>
            <person name="Land M."/>
            <person name="Hauser L."/>
            <person name="Kyrpides N."/>
            <person name="Mikhailova N."/>
            <person name="Marsh T."/>
            <person name="Richardson P."/>
        </authorList>
    </citation>
    <scope>NUCLEOTIDE SEQUENCE [LARGE SCALE GENOMIC DNA]</scope>
    <source>
        <strain>12J</strain>
    </source>
</reference>
<gene>
    <name type="ordered locus">Rpic_4617</name>
</gene>
<organism>
    <name type="scientific">Ralstonia pickettii (strain 12J)</name>
    <dbReference type="NCBI Taxonomy" id="402626"/>
    <lineage>
        <taxon>Bacteria</taxon>
        <taxon>Pseudomonadati</taxon>
        <taxon>Pseudomonadota</taxon>
        <taxon>Betaproteobacteria</taxon>
        <taxon>Burkholderiales</taxon>
        <taxon>Burkholderiaceae</taxon>
        <taxon>Ralstonia</taxon>
    </lineage>
</organism>